<evidence type="ECO:0000255" key="1">
    <source>
        <dbReference type="HAMAP-Rule" id="MF_00001"/>
    </source>
</evidence>
<proteinExistence type="inferred from homology"/>
<feature type="chain" id="PRO_0000113196" description="Aspartate carbamoyltransferase catalytic subunit">
    <location>
        <begin position="1"/>
        <end position="293"/>
    </location>
</feature>
<feature type="binding site" evidence="1">
    <location>
        <position position="50"/>
    </location>
    <ligand>
        <name>carbamoyl phosphate</name>
        <dbReference type="ChEBI" id="CHEBI:58228"/>
    </ligand>
</feature>
<feature type="binding site" evidence="1">
    <location>
        <position position="51"/>
    </location>
    <ligand>
        <name>carbamoyl phosphate</name>
        <dbReference type="ChEBI" id="CHEBI:58228"/>
    </ligand>
</feature>
<feature type="binding site" evidence="1">
    <location>
        <position position="78"/>
    </location>
    <ligand>
        <name>L-aspartate</name>
        <dbReference type="ChEBI" id="CHEBI:29991"/>
    </ligand>
</feature>
<feature type="binding site" evidence="1">
    <location>
        <position position="100"/>
    </location>
    <ligand>
        <name>carbamoyl phosphate</name>
        <dbReference type="ChEBI" id="CHEBI:58228"/>
    </ligand>
</feature>
<feature type="binding site" evidence="1">
    <location>
        <position position="127"/>
    </location>
    <ligand>
        <name>carbamoyl phosphate</name>
        <dbReference type="ChEBI" id="CHEBI:58228"/>
    </ligand>
</feature>
<feature type="binding site" evidence="1">
    <location>
        <position position="130"/>
    </location>
    <ligand>
        <name>carbamoyl phosphate</name>
        <dbReference type="ChEBI" id="CHEBI:58228"/>
    </ligand>
</feature>
<feature type="binding site" evidence="1">
    <location>
        <position position="160"/>
    </location>
    <ligand>
        <name>L-aspartate</name>
        <dbReference type="ChEBI" id="CHEBI:29991"/>
    </ligand>
</feature>
<feature type="binding site" evidence="1">
    <location>
        <position position="210"/>
    </location>
    <ligand>
        <name>L-aspartate</name>
        <dbReference type="ChEBI" id="CHEBI:29991"/>
    </ligand>
</feature>
<feature type="binding site" evidence="1">
    <location>
        <position position="253"/>
    </location>
    <ligand>
        <name>carbamoyl phosphate</name>
        <dbReference type="ChEBI" id="CHEBI:58228"/>
    </ligand>
</feature>
<feature type="binding site" evidence="1">
    <location>
        <position position="254"/>
    </location>
    <ligand>
        <name>carbamoyl phosphate</name>
        <dbReference type="ChEBI" id="CHEBI:58228"/>
    </ligand>
</feature>
<gene>
    <name evidence="1" type="primary">pyrB</name>
    <name type="ordered locus">SAR1176</name>
</gene>
<keyword id="KW-0665">Pyrimidine biosynthesis</keyword>
<keyword id="KW-0808">Transferase</keyword>
<reference key="1">
    <citation type="journal article" date="2004" name="Proc. Natl. Acad. Sci. U.S.A.">
        <title>Complete genomes of two clinical Staphylococcus aureus strains: evidence for the rapid evolution of virulence and drug resistance.</title>
        <authorList>
            <person name="Holden M.T.G."/>
            <person name="Feil E.J."/>
            <person name="Lindsay J.A."/>
            <person name="Peacock S.J."/>
            <person name="Day N.P.J."/>
            <person name="Enright M.C."/>
            <person name="Foster T.J."/>
            <person name="Moore C.E."/>
            <person name="Hurst L."/>
            <person name="Atkin R."/>
            <person name="Barron A."/>
            <person name="Bason N."/>
            <person name="Bentley S.D."/>
            <person name="Chillingworth C."/>
            <person name="Chillingworth T."/>
            <person name="Churcher C."/>
            <person name="Clark L."/>
            <person name="Corton C."/>
            <person name="Cronin A."/>
            <person name="Doggett J."/>
            <person name="Dowd L."/>
            <person name="Feltwell T."/>
            <person name="Hance Z."/>
            <person name="Harris B."/>
            <person name="Hauser H."/>
            <person name="Holroyd S."/>
            <person name="Jagels K."/>
            <person name="James K.D."/>
            <person name="Lennard N."/>
            <person name="Line A."/>
            <person name="Mayes R."/>
            <person name="Moule S."/>
            <person name="Mungall K."/>
            <person name="Ormond D."/>
            <person name="Quail M.A."/>
            <person name="Rabbinowitsch E."/>
            <person name="Rutherford K.M."/>
            <person name="Sanders M."/>
            <person name="Sharp S."/>
            <person name="Simmonds M."/>
            <person name="Stevens K."/>
            <person name="Whitehead S."/>
            <person name="Barrell B.G."/>
            <person name="Spratt B.G."/>
            <person name="Parkhill J."/>
        </authorList>
    </citation>
    <scope>NUCLEOTIDE SEQUENCE [LARGE SCALE GENOMIC DNA]</scope>
    <source>
        <strain>MRSA252</strain>
    </source>
</reference>
<name>PYRB_STAAR</name>
<protein>
    <recommendedName>
        <fullName evidence="1">Aspartate carbamoyltransferase catalytic subunit</fullName>
        <ecNumber evidence="1">2.1.3.2</ecNumber>
    </recommendedName>
    <alternativeName>
        <fullName evidence="1">Aspartate transcarbamylase</fullName>
        <shortName evidence="1">ATCase</shortName>
    </alternativeName>
</protein>
<dbReference type="EC" id="2.1.3.2" evidence="1"/>
<dbReference type="EMBL" id="BX571856">
    <property type="protein sequence ID" value="CAG40178.1"/>
    <property type="molecule type" value="Genomic_DNA"/>
</dbReference>
<dbReference type="RefSeq" id="WP_001016166.1">
    <property type="nucleotide sequence ID" value="NC_002952.2"/>
</dbReference>
<dbReference type="SMR" id="Q6GHN5"/>
<dbReference type="KEGG" id="sar:SAR1176"/>
<dbReference type="HOGENOM" id="CLU_043846_2_1_9"/>
<dbReference type="UniPathway" id="UPA00070">
    <property type="reaction ID" value="UER00116"/>
</dbReference>
<dbReference type="Proteomes" id="UP000000596">
    <property type="component" value="Chromosome"/>
</dbReference>
<dbReference type="GO" id="GO:0005829">
    <property type="term" value="C:cytosol"/>
    <property type="evidence" value="ECO:0007669"/>
    <property type="project" value="TreeGrafter"/>
</dbReference>
<dbReference type="GO" id="GO:0016597">
    <property type="term" value="F:amino acid binding"/>
    <property type="evidence" value="ECO:0007669"/>
    <property type="project" value="InterPro"/>
</dbReference>
<dbReference type="GO" id="GO:0004070">
    <property type="term" value="F:aspartate carbamoyltransferase activity"/>
    <property type="evidence" value="ECO:0007669"/>
    <property type="project" value="UniProtKB-UniRule"/>
</dbReference>
<dbReference type="GO" id="GO:0006207">
    <property type="term" value="P:'de novo' pyrimidine nucleobase biosynthetic process"/>
    <property type="evidence" value="ECO:0007669"/>
    <property type="project" value="InterPro"/>
</dbReference>
<dbReference type="GO" id="GO:0044205">
    <property type="term" value="P:'de novo' UMP biosynthetic process"/>
    <property type="evidence" value="ECO:0007669"/>
    <property type="project" value="UniProtKB-UniRule"/>
</dbReference>
<dbReference type="GO" id="GO:0006520">
    <property type="term" value="P:amino acid metabolic process"/>
    <property type="evidence" value="ECO:0007669"/>
    <property type="project" value="InterPro"/>
</dbReference>
<dbReference type="FunFam" id="3.40.50.1370:FF:000011">
    <property type="entry name" value="Aspartate carbamoyltransferase"/>
    <property type="match status" value="1"/>
</dbReference>
<dbReference type="Gene3D" id="3.40.50.1370">
    <property type="entry name" value="Aspartate/ornithine carbamoyltransferase"/>
    <property type="match status" value="2"/>
</dbReference>
<dbReference type="HAMAP" id="MF_00001">
    <property type="entry name" value="Asp_carb_tr"/>
    <property type="match status" value="1"/>
</dbReference>
<dbReference type="InterPro" id="IPR006132">
    <property type="entry name" value="Asp/Orn_carbamoyltranf_P-bd"/>
</dbReference>
<dbReference type="InterPro" id="IPR006130">
    <property type="entry name" value="Asp/Orn_carbamoylTrfase"/>
</dbReference>
<dbReference type="InterPro" id="IPR036901">
    <property type="entry name" value="Asp/Orn_carbamoylTrfase_sf"/>
</dbReference>
<dbReference type="InterPro" id="IPR002082">
    <property type="entry name" value="Asp_carbamoyltransf"/>
</dbReference>
<dbReference type="InterPro" id="IPR006131">
    <property type="entry name" value="Asp_carbamoyltransf_Asp/Orn-bd"/>
</dbReference>
<dbReference type="NCBIfam" id="TIGR00670">
    <property type="entry name" value="asp_carb_tr"/>
    <property type="match status" value="1"/>
</dbReference>
<dbReference type="NCBIfam" id="NF002032">
    <property type="entry name" value="PRK00856.1"/>
    <property type="match status" value="1"/>
</dbReference>
<dbReference type="PANTHER" id="PTHR45753:SF6">
    <property type="entry name" value="ASPARTATE CARBAMOYLTRANSFERASE"/>
    <property type="match status" value="1"/>
</dbReference>
<dbReference type="PANTHER" id="PTHR45753">
    <property type="entry name" value="ORNITHINE CARBAMOYLTRANSFERASE, MITOCHONDRIAL"/>
    <property type="match status" value="1"/>
</dbReference>
<dbReference type="Pfam" id="PF00185">
    <property type="entry name" value="OTCace"/>
    <property type="match status" value="1"/>
</dbReference>
<dbReference type="Pfam" id="PF02729">
    <property type="entry name" value="OTCace_N"/>
    <property type="match status" value="1"/>
</dbReference>
<dbReference type="PRINTS" id="PR00100">
    <property type="entry name" value="AOTCASE"/>
</dbReference>
<dbReference type="PRINTS" id="PR00101">
    <property type="entry name" value="ATCASE"/>
</dbReference>
<dbReference type="SUPFAM" id="SSF53671">
    <property type="entry name" value="Aspartate/ornithine carbamoyltransferase"/>
    <property type="match status" value="1"/>
</dbReference>
<dbReference type="PROSITE" id="PS00097">
    <property type="entry name" value="CARBAMOYLTRANSFERASE"/>
    <property type="match status" value="1"/>
</dbReference>
<organism>
    <name type="scientific">Staphylococcus aureus (strain MRSA252)</name>
    <dbReference type="NCBI Taxonomy" id="282458"/>
    <lineage>
        <taxon>Bacteria</taxon>
        <taxon>Bacillati</taxon>
        <taxon>Bacillota</taxon>
        <taxon>Bacilli</taxon>
        <taxon>Bacillales</taxon>
        <taxon>Staphylococcaceae</taxon>
        <taxon>Staphylococcus</taxon>
    </lineage>
</organism>
<sequence>MNHLLSMEHLSTDQIYKLIQKASQFKSGERQLPNFEGKYVANLFFENSTRTKCSFEMAELKLGLKTISFETSTSSVSKGESLYDTCKTLESIGCDLLVIRHPFNNYYEKLANINIPIANAGDGSGQHPTQSLLDLMTIYEEYGYFEGLNVLICGDIKNSRVARSNYHSLKALGANVMFNSPNAWIDDSLEAPYVNIDDVIETVDIVMLLRIQHERHGLAEETRFAADDYHQKHGLNEVRYNKLQEHAIVMHPAPVNRGVEIQSDLVEASKSRIFKQMENGVYLRMAVIDELLK</sequence>
<accession>Q6GHN5</accession>
<comment type="function">
    <text evidence="1">Catalyzes the condensation of carbamoyl phosphate and aspartate to form carbamoyl aspartate and inorganic phosphate, the committed step in the de novo pyrimidine nucleotide biosynthesis pathway.</text>
</comment>
<comment type="catalytic activity">
    <reaction evidence="1">
        <text>carbamoyl phosphate + L-aspartate = N-carbamoyl-L-aspartate + phosphate + H(+)</text>
        <dbReference type="Rhea" id="RHEA:20013"/>
        <dbReference type="ChEBI" id="CHEBI:15378"/>
        <dbReference type="ChEBI" id="CHEBI:29991"/>
        <dbReference type="ChEBI" id="CHEBI:32814"/>
        <dbReference type="ChEBI" id="CHEBI:43474"/>
        <dbReference type="ChEBI" id="CHEBI:58228"/>
        <dbReference type="EC" id="2.1.3.2"/>
    </reaction>
</comment>
<comment type="pathway">
    <text evidence="1">Pyrimidine metabolism; UMP biosynthesis via de novo pathway; (S)-dihydroorotate from bicarbonate: step 2/3.</text>
</comment>
<comment type="subunit">
    <text evidence="1">Heterododecamer (2C3:3R2) of six catalytic PyrB chains organized as two trimers (C3), and six regulatory PyrI chains organized as three dimers (R2).</text>
</comment>
<comment type="similarity">
    <text evidence="1">Belongs to the aspartate/ornithine carbamoyltransferase superfamily. ATCase family.</text>
</comment>